<sequence>MKRSVRPLFSALLFAFFAATLICRVAIRRSSFSFASAIAELGSSGLMTEDIVFNETLLEFAAIDPGEPNFKQEVDLISDYDHTRRSHRRHFSSMSIRPSEQQRRVSRDIASSSKFPVTLRSSQAYRYWSEFKRNLRLWARRRAYEPNIMLDLIRLVKNPIDVHNGVVSISSERYLSCAVVGNSGTLLNSQYGDLIDKHEIVIRLNNAKTERFEKKVGSKTNISFINSNILHQCGRRESCYCHPYGETVPIVMYICQPIHVLDYTLCKPSHRAPLLITDPRFDVMCARIVKYYSVKKFLEEKKAKGFVDWSKDHEGSLFHYSSGMQAVMLAVGICEKVSVFGFGKLNSTKHHYHTNQKAELKLHDYEAEYRLYRDLENSPRAIPFLPKEFKIPLVQVYH</sequence>
<protein>
    <recommendedName>
        <fullName evidence="5">Beta-1,6-galactosyltransferase GALT29A</fullName>
        <ecNumber evidence="5">2.4.1.-</ecNumber>
    </recommendedName>
    <alternativeName>
        <fullName evidence="5">GT29 family galactosyltransferase 1</fullName>
        <shortName evidence="4">AtGALT29A</shortName>
    </alternativeName>
    <alternativeName>
        <fullName evidence="5">Sialyltransferase-like protein GT29A</fullName>
    </alternativeName>
</protein>
<proteinExistence type="evidence at protein level"/>
<gene>
    <name evidence="4" type="primary">GALT29A</name>
    <name evidence="6" type="ordered locus">At1g08280</name>
    <name evidence="7" type="ORF">T23G18.14</name>
</gene>
<name>GT29A_ARATH</name>
<comment type="function">
    <text evidence="3">Galactosyltransferase involved in the biosynthesis of type II arabinogalactan. Possesses galactosyltransferase (GalT) activity in vitro, transferring galactose from UDP-galactose to a mixture of various oligosaccharides derived from arabinogalactan proteins. Forms a complex with GALT31A that can work cooperatively to enhance the activities of adding galactose residues at O6 positions to beta-1,6-galactan and beta-1,3-galactan.</text>
</comment>
<comment type="subunit">
    <text evidence="3">Interacts with GALT31A.</text>
</comment>
<comment type="subcellular location">
    <subcellularLocation>
        <location evidence="3">Golgi apparatus membrane</location>
        <topology evidence="5">Single-pass type II membrane protein</topology>
    </subcellularLocation>
</comment>
<comment type="similarity">
    <text evidence="5">Belongs to the glycosyltransferase 29 family.</text>
</comment>
<reference key="1">
    <citation type="journal article" date="2014" name="Plant J.">
        <title>The plant glycosyltransferase clone collection for functional genomics.</title>
        <authorList>
            <person name="Lao J."/>
            <person name="Oikawa A."/>
            <person name="Bromley J.R."/>
            <person name="McInerney P."/>
            <person name="Suttangkakul A."/>
            <person name="Smith-Moritz A.M."/>
            <person name="Plahar H."/>
            <person name="Chiu T.-Y."/>
            <person name="Gonzalez Fernandez-Nino S.M.G."/>
            <person name="Ebert B."/>
            <person name="Yang F."/>
            <person name="Christiansen K.M."/>
            <person name="Hansen S.F."/>
            <person name="Stonebloom S."/>
            <person name="Adams P.D."/>
            <person name="Ronald P.C."/>
            <person name="Hillson N.J."/>
            <person name="Hadi M.Z."/>
            <person name="Vega-Sanchez M.E."/>
            <person name="Loque D."/>
            <person name="Scheller H.V."/>
            <person name="Heazlewood J.L."/>
        </authorList>
    </citation>
    <scope>NUCLEOTIDE SEQUENCE [MRNA]</scope>
    <source>
        <strain>cv. Columbia</strain>
    </source>
</reference>
<reference key="2">
    <citation type="journal article" date="2000" name="Nature">
        <title>Sequence and analysis of chromosome 1 of the plant Arabidopsis thaliana.</title>
        <authorList>
            <person name="Theologis A."/>
            <person name="Ecker J.R."/>
            <person name="Palm C.J."/>
            <person name="Federspiel N.A."/>
            <person name="Kaul S."/>
            <person name="White O."/>
            <person name="Alonso J."/>
            <person name="Altafi H."/>
            <person name="Araujo R."/>
            <person name="Bowman C.L."/>
            <person name="Brooks S.Y."/>
            <person name="Buehler E."/>
            <person name="Chan A."/>
            <person name="Chao Q."/>
            <person name="Chen H."/>
            <person name="Cheuk R.F."/>
            <person name="Chin C.W."/>
            <person name="Chung M.K."/>
            <person name="Conn L."/>
            <person name="Conway A.B."/>
            <person name="Conway A.R."/>
            <person name="Creasy T.H."/>
            <person name="Dewar K."/>
            <person name="Dunn P."/>
            <person name="Etgu P."/>
            <person name="Feldblyum T.V."/>
            <person name="Feng J.-D."/>
            <person name="Fong B."/>
            <person name="Fujii C.Y."/>
            <person name="Gill J.E."/>
            <person name="Goldsmith A.D."/>
            <person name="Haas B."/>
            <person name="Hansen N.F."/>
            <person name="Hughes B."/>
            <person name="Huizar L."/>
            <person name="Hunter J.L."/>
            <person name="Jenkins J."/>
            <person name="Johnson-Hopson C."/>
            <person name="Khan S."/>
            <person name="Khaykin E."/>
            <person name="Kim C.J."/>
            <person name="Koo H.L."/>
            <person name="Kremenetskaia I."/>
            <person name="Kurtz D.B."/>
            <person name="Kwan A."/>
            <person name="Lam B."/>
            <person name="Langin-Hooper S."/>
            <person name="Lee A."/>
            <person name="Lee J.M."/>
            <person name="Lenz C.A."/>
            <person name="Li J.H."/>
            <person name="Li Y.-P."/>
            <person name="Lin X."/>
            <person name="Liu S.X."/>
            <person name="Liu Z.A."/>
            <person name="Luros J.S."/>
            <person name="Maiti R."/>
            <person name="Marziali A."/>
            <person name="Militscher J."/>
            <person name="Miranda M."/>
            <person name="Nguyen M."/>
            <person name="Nierman W.C."/>
            <person name="Osborne B.I."/>
            <person name="Pai G."/>
            <person name="Peterson J."/>
            <person name="Pham P.K."/>
            <person name="Rizzo M."/>
            <person name="Rooney T."/>
            <person name="Rowley D."/>
            <person name="Sakano H."/>
            <person name="Salzberg S.L."/>
            <person name="Schwartz J.R."/>
            <person name="Shinn P."/>
            <person name="Southwick A.M."/>
            <person name="Sun H."/>
            <person name="Tallon L.J."/>
            <person name="Tambunga G."/>
            <person name="Toriumi M.J."/>
            <person name="Town C.D."/>
            <person name="Utterback T."/>
            <person name="Van Aken S."/>
            <person name="Vaysberg M."/>
            <person name="Vysotskaia V.S."/>
            <person name="Walker M."/>
            <person name="Wu D."/>
            <person name="Yu G."/>
            <person name="Fraser C.M."/>
            <person name="Venter J.C."/>
            <person name="Davis R.W."/>
        </authorList>
    </citation>
    <scope>NUCLEOTIDE SEQUENCE [LARGE SCALE GENOMIC DNA]</scope>
    <source>
        <strain>cv. Columbia</strain>
    </source>
</reference>
<reference key="3">
    <citation type="journal article" date="2017" name="Plant J.">
        <title>Araport11: a complete reannotation of the Arabidopsis thaliana reference genome.</title>
        <authorList>
            <person name="Cheng C.Y."/>
            <person name="Krishnakumar V."/>
            <person name="Chan A.P."/>
            <person name="Thibaud-Nissen F."/>
            <person name="Schobel S."/>
            <person name="Town C.D."/>
        </authorList>
    </citation>
    <scope>GENOME REANNOTATION</scope>
    <source>
        <strain>cv. Columbia</strain>
    </source>
</reference>
<reference key="4">
    <citation type="journal article" date="2003" name="Science">
        <title>Empirical analysis of transcriptional activity in the Arabidopsis genome.</title>
        <authorList>
            <person name="Yamada K."/>
            <person name="Lim J."/>
            <person name="Dale J.M."/>
            <person name="Chen H."/>
            <person name="Shinn P."/>
            <person name="Palm C.J."/>
            <person name="Southwick A.M."/>
            <person name="Wu H.C."/>
            <person name="Kim C.J."/>
            <person name="Nguyen M."/>
            <person name="Pham P.K."/>
            <person name="Cheuk R.F."/>
            <person name="Karlin-Newmann G."/>
            <person name="Liu S.X."/>
            <person name="Lam B."/>
            <person name="Sakano H."/>
            <person name="Wu T."/>
            <person name="Yu G."/>
            <person name="Miranda M."/>
            <person name="Quach H.L."/>
            <person name="Tripp M."/>
            <person name="Chang C.H."/>
            <person name="Lee J.M."/>
            <person name="Toriumi M.J."/>
            <person name="Chan M.M."/>
            <person name="Tang C.C."/>
            <person name="Onodera C.S."/>
            <person name="Deng J.M."/>
            <person name="Akiyama K."/>
            <person name="Ansari Y."/>
            <person name="Arakawa T."/>
            <person name="Banh J."/>
            <person name="Banno F."/>
            <person name="Bowser L."/>
            <person name="Brooks S.Y."/>
            <person name="Carninci P."/>
            <person name="Chao Q."/>
            <person name="Choy N."/>
            <person name="Enju A."/>
            <person name="Goldsmith A.D."/>
            <person name="Gurjal M."/>
            <person name="Hansen N.F."/>
            <person name="Hayashizaki Y."/>
            <person name="Johnson-Hopson C."/>
            <person name="Hsuan V.W."/>
            <person name="Iida K."/>
            <person name="Karnes M."/>
            <person name="Khan S."/>
            <person name="Koesema E."/>
            <person name="Ishida J."/>
            <person name="Jiang P.X."/>
            <person name="Jones T."/>
            <person name="Kawai J."/>
            <person name="Kamiya A."/>
            <person name="Meyers C."/>
            <person name="Nakajima M."/>
            <person name="Narusaka M."/>
            <person name="Seki M."/>
            <person name="Sakurai T."/>
            <person name="Satou M."/>
            <person name="Tamse R."/>
            <person name="Vaysberg M."/>
            <person name="Wallender E.K."/>
            <person name="Wong C."/>
            <person name="Yamamura Y."/>
            <person name="Yuan S."/>
            <person name="Shinozaki K."/>
            <person name="Davis R.W."/>
            <person name="Theologis A."/>
            <person name="Ecker J.R."/>
        </authorList>
    </citation>
    <scope>NUCLEOTIDE SEQUENCE [LARGE SCALE MRNA] OF 284-398</scope>
    <source>
        <strain>cv. Columbia</strain>
    </source>
</reference>
<reference key="5">
    <citation type="submission" date="2006-07" db="EMBL/GenBank/DDBJ databases">
        <title>Large-scale analysis of RIKEN Arabidopsis full-length (RAFL) cDNAs.</title>
        <authorList>
            <person name="Totoki Y."/>
            <person name="Seki M."/>
            <person name="Ishida J."/>
            <person name="Nakajima M."/>
            <person name="Enju A."/>
            <person name="Kamiya A."/>
            <person name="Narusaka M."/>
            <person name="Shin-i T."/>
            <person name="Nakagawa M."/>
            <person name="Sakamoto N."/>
            <person name="Oishi K."/>
            <person name="Kohara Y."/>
            <person name="Kobayashi M."/>
            <person name="Toyoda A."/>
            <person name="Sakaki Y."/>
            <person name="Sakurai T."/>
            <person name="Iida K."/>
            <person name="Akiyama K."/>
            <person name="Satou M."/>
            <person name="Toyoda T."/>
            <person name="Konagaya A."/>
            <person name="Carninci P."/>
            <person name="Kawai J."/>
            <person name="Hayashizaki Y."/>
            <person name="Shinozaki K."/>
        </authorList>
    </citation>
    <scope>NUCLEOTIDE SEQUENCE [LARGE SCALE MRNA] OF 284-398</scope>
    <source>
        <strain>cv. Columbia</strain>
    </source>
</reference>
<reference key="6">
    <citation type="journal article" date="2014" name="BMC Plant Biol.">
        <title>Galactosyltransferases from Arabidopsis thaliana in the biosynthesis of type II arabinogalactan: molecular interaction enhances enzyme activity.</title>
        <authorList>
            <person name="Dilokpimol A."/>
            <person name="Poulsen C.P."/>
            <person name="Vereb G."/>
            <person name="Kaneko S."/>
            <person name="Schulz A."/>
            <person name="Geshi N."/>
        </authorList>
    </citation>
    <scope>FUNCTION</scope>
    <scope>INTERACTION WITH GALT31A</scope>
    <scope>SUBCELLULAR LOCATION</scope>
</reference>
<evidence type="ECO:0000255" key="1"/>
<evidence type="ECO:0000255" key="2">
    <source>
        <dbReference type="PROSITE-ProRule" id="PRU00498"/>
    </source>
</evidence>
<evidence type="ECO:0000269" key="3">
    <source>
    </source>
</evidence>
<evidence type="ECO:0000303" key="4">
    <source>
    </source>
</evidence>
<evidence type="ECO:0000305" key="5"/>
<evidence type="ECO:0000312" key="6">
    <source>
        <dbReference type="Araport" id="AT1G08280"/>
    </source>
</evidence>
<evidence type="ECO:0000312" key="7">
    <source>
        <dbReference type="EMBL" id="AAF18241.1"/>
    </source>
</evidence>
<feature type="chain" id="PRO_0000434311" description="Beta-1,6-galactosyltransferase GALT29A">
    <location>
        <begin position="1"/>
        <end position="398"/>
    </location>
</feature>
<feature type="topological domain" description="Cytoplasmic" evidence="5">
    <location>
        <begin position="1"/>
        <end position="6"/>
    </location>
</feature>
<feature type="transmembrane region" description="Helical; Signal-anchor for type II membrane protein" evidence="1">
    <location>
        <begin position="7"/>
        <end position="27"/>
    </location>
</feature>
<feature type="topological domain" description="Lumenal" evidence="5">
    <location>
        <begin position="28"/>
        <end position="398"/>
    </location>
</feature>
<feature type="glycosylation site" description="N-linked (GlcNAc...) asparagine" evidence="2">
    <location>
        <position position="221"/>
    </location>
</feature>
<feature type="glycosylation site" description="N-linked (GlcNAc...) asparagine" evidence="2">
    <location>
        <position position="346"/>
    </location>
</feature>
<accession>Q9SGD2</accession>
<accession>Q84W00</accession>
<dbReference type="EC" id="2.4.1.-" evidence="5"/>
<dbReference type="EMBL" id="KJ139020">
    <property type="protein sequence ID" value="AHL38960.1"/>
    <property type="molecule type" value="mRNA"/>
</dbReference>
<dbReference type="EMBL" id="AC011438">
    <property type="protein sequence ID" value="AAF18241.1"/>
    <property type="molecule type" value="Genomic_DNA"/>
</dbReference>
<dbReference type="EMBL" id="CP002684">
    <property type="protein sequence ID" value="AEE28269.1"/>
    <property type="molecule type" value="Genomic_DNA"/>
</dbReference>
<dbReference type="EMBL" id="BT004583">
    <property type="protein sequence ID" value="AAO42829.1"/>
    <property type="molecule type" value="mRNA"/>
</dbReference>
<dbReference type="EMBL" id="AK227539">
    <property type="protein sequence ID" value="BAE99537.1"/>
    <property type="molecule type" value="mRNA"/>
</dbReference>
<dbReference type="PIR" id="G86216">
    <property type="entry name" value="G86216"/>
</dbReference>
<dbReference type="RefSeq" id="NP_172305.1">
    <property type="nucleotide sequence ID" value="NM_100701.3"/>
</dbReference>
<dbReference type="SMR" id="Q9SGD2"/>
<dbReference type="FunCoup" id="Q9SGD2">
    <property type="interactions" value="327"/>
</dbReference>
<dbReference type="STRING" id="3702.Q9SGD2"/>
<dbReference type="CAZy" id="GT29">
    <property type="family name" value="Glycosyltransferase Family 29"/>
</dbReference>
<dbReference type="GlyCosmos" id="Q9SGD2">
    <property type="glycosylation" value="2 sites, No reported glycans"/>
</dbReference>
<dbReference type="GlyGen" id="Q9SGD2">
    <property type="glycosylation" value="2 sites"/>
</dbReference>
<dbReference type="iPTMnet" id="Q9SGD2"/>
<dbReference type="PaxDb" id="3702-AT1G08280.1"/>
<dbReference type="ProteomicsDB" id="248520"/>
<dbReference type="EnsemblPlants" id="AT1G08280.1">
    <property type="protein sequence ID" value="AT1G08280.1"/>
    <property type="gene ID" value="AT1G08280"/>
</dbReference>
<dbReference type="GeneID" id="837348"/>
<dbReference type="Gramene" id="AT1G08280.1">
    <property type="protein sequence ID" value="AT1G08280.1"/>
    <property type="gene ID" value="AT1G08280"/>
</dbReference>
<dbReference type="KEGG" id="ath:AT1G08280"/>
<dbReference type="Araport" id="AT1G08280"/>
<dbReference type="TAIR" id="AT1G08280">
    <property type="gene designation" value="GALT29A"/>
</dbReference>
<dbReference type="eggNOG" id="KOG2692">
    <property type="taxonomic scope" value="Eukaryota"/>
</dbReference>
<dbReference type="HOGENOM" id="CLU_044787_1_0_1"/>
<dbReference type="InParanoid" id="Q9SGD2"/>
<dbReference type="OMA" id="MVCNSSH"/>
<dbReference type="OrthoDB" id="10264956at2759"/>
<dbReference type="PhylomeDB" id="Q9SGD2"/>
<dbReference type="PRO" id="PR:Q9SGD2"/>
<dbReference type="Proteomes" id="UP000006548">
    <property type="component" value="Chromosome 1"/>
</dbReference>
<dbReference type="ExpressionAtlas" id="Q9SGD2">
    <property type="expression patterns" value="baseline and differential"/>
</dbReference>
<dbReference type="GO" id="GO:0000139">
    <property type="term" value="C:Golgi membrane"/>
    <property type="evidence" value="ECO:0000314"/>
    <property type="project" value="UniProtKB"/>
</dbReference>
<dbReference type="GO" id="GO:0008378">
    <property type="term" value="F:galactosyltransferase activity"/>
    <property type="evidence" value="ECO:0000314"/>
    <property type="project" value="TAIR"/>
</dbReference>
<dbReference type="GO" id="GO:0008373">
    <property type="term" value="F:sialyltransferase activity"/>
    <property type="evidence" value="ECO:0007669"/>
    <property type="project" value="InterPro"/>
</dbReference>
<dbReference type="GO" id="GO:0006486">
    <property type="term" value="P:protein glycosylation"/>
    <property type="evidence" value="ECO:0007669"/>
    <property type="project" value="InterPro"/>
</dbReference>
<dbReference type="CDD" id="cd19952">
    <property type="entry name" value="GT29"/>
    <property type="match status" value="1"/>
</dbReference>
<dbReference type="FunFam" id="3.90.1480.20:FF:000016">
    <property type="entry name" value="Sialyltransferase-like protein 3"/>
    <property type="match status" value="1"/>
</dbReference>
<dbReference type="Gene3D" id="3.90.1480.20">
    <property type="entry name" value="Glycosyl transferase family 29"/>
    <property type="match status" value="1"/>
</dbReference>
<dbReference type="InterPro" id="IPR001675">
    <property type="entry name" value="Glyco_trans_29"/>
</dbReference>
<dbReference type="InterPro" id="IPR038578">
    <property type="entry name" value="GT29-like_sf"/>
</dbReference>
<dbReference type="PANTHER" id="PTHR46779">
    <property type="entry name" value="BETA-1,6-GALACTOSYLTRANSFERASE GALT29A"/>
    <property type="match status" value="1"/>
</dbReference>
<dbReference type="PANTHER" id="PTHR46779:SF1">
    <property type="entry name" value="BETA-1,6-GALACTOSYLTRANSFERASE GALT29A"/>
    <property type="match status" value="1"/>
</dbReference>
<dbReference type="Pfam" id="PF00777">
    <property type="entry name" value="Glyco_transf_29"/>
    <property type="match status" value="1"/>
</dbReference>
<organism>
    <name type="scientific">Arabidopsis thaliana</name>
    <name type="common">Mouse-ear cress</name>
    <dbReference type="NCBI Taxonomy" id="3702"/>
    <lineage>
        <taxon>Eukaryota</taxon>
        <taxon>Viridiplantae</taxon>
        <taxon>Streptophyta</taxon>
        <taxon>Embryophyta</taxon>
        <taxon>Tracheophyta</taxon>
        <taxon>Spermatophyta</taxon>
        <taxon>Magnoliopsida</taxon>
        <taxon>eudicotyledons</taxon>
        <taxon>Gunneridae</taxon>
        <taxon>Pentapetalae</taxon>
        <taxon>rosids</taxon>
        <taxon>malvids</taxon>
        <taxon>Brassicales</taxon>
        <taxon>Brassicaceae</taxon>
        <taxon>Camelineae</taxon>
        <taxon>Arabidopsis</taxon>
    </lineage>
</organism>
<keyword id="KW-0325">Glycoprotein</keyword>
<keyword id="KW-0328">Glycosyltransferase</keyword>
<keyword id="KW-0333">Golgi apparatus</keyword>
<keyword id="KW-0472">Membrane</keyword>
<keyword id="KW-1185">Reference proteome</keyword>
<keyword id="KW-0735">Signal-anchor</keyword>
<keyword id="KW-0808">Transferase</keyword>
<keyword id="KW-0812">Transmembrane</keyword>
<keyword id="KW-1133">Transmembrane helix</keyword>